<accession>C1CCZ1</accession>
<reference key="1">
    <citation type="journal article" date="2010" name="Genome Biol.">
        <title>Structure and dynamics of the pan-genome of Streptococcus pneumoniae and closely related species.</title>
        <authorList>
            <person name="Donati C."/>
            <person name="Hiller N.L."/>
            <person name="Tettelin H."/>
            <person name="Muzzi A."/>
            <person name="Croucher N.J."/>
            <person name="Angiuoli S.V."/>
            <person name="Oggioni M."/>
            <person name="Dunning Hotopp J.C."/>
            <person name="Hu F.Z."/>
            <person name="Riley D.R."/>
            <person name="Covacci A."/>
            <person name="Mitchell T.J."/>
            <person name="Bentley S.D."/>
            <person name="Kilian M."/>
            <person name="Ehrlich G.D."/>
            <person name="Rappuoli R."/>
            <person name="Moxon E.R."/>
            <person name="Masignani V."/>
        </authorList>
    </citation>
    <scope>NUCLEOTIDE SEQUENCE [LARGE SCALE GENOMIC DNA]</scope>
    <source>
        <strain>JJA</strain>
    </source>
</reference>
<protein>
    <recommendedName>
        <fullName evidence="1">UvrABC system protein C</fullName>
        <shortName evidence="1">Protein UvrC</shortName>
    </recommendedName>
    <alternativeName>
        <fullName evidence="1">Excinuclease ABC subunit C</fullName>
    </alternativeName>
</protein>
<gene>
    <name evidence="1" type="primary">uvrC</name>
    <name type="ordered locus">SPJ_0569</name>
</gene>
<name>UVRC_STRZJ</name>
<evidence type="ECO:0000255" key="1">
    <source>
        <dbReference type="HAMAP-Rule" id="MF_00203"/>
    </source>
</evidence>
<organism>
    <name type="scientific">Streptococcus pneumoniae (strain JJA)</name>
    <dbReference type="NCBI Taxonomy" id="488222"/>
    <lineage>
        <taxon>Bacteria</taxon>
        <taxon>Bacillati</taxon>
        <taxon>Bacillota</taxon>
        <taxon>Bacilli</taxon>
        <taxon>Lactobacillales</taxon>
        <taxon>Streptococcaceae</taxon>
        <taxon>Streptococcus</taxon>
    </lineage>
</organism>
<proteinExistence type="inferred from homology"/>
<comment type="function">
    <text evidence="1">The UvrABC repair system catalyzes the recognition and processing of DNA lesions. UvrC both incises the 5' and 3' sides of the lesion. The N-terminal half is responsible for the 3' incision and the C-terminal half is responsible for the 5' incision.</text>
</comment>
<comment type="subunit">
    <text evidence="1">Interacts with UvrB in an incision complex.</text>
</comment>
<comment type="subcellular location">
    <subcellularLocation>
        <location evidence="1">Cytoplasm</location>
    </subcellularLocation>
</comment>
<comment type="similarity">
    <text evidence="1">Belongs to the UvrC family.</text>
</comment>
<keyword id="KW-0963">Cytoplasm</keyword>
<keyword id="KW-0227">DNA damage</keyword>
<keyword id="KW-0228">DNA excision</keyword>
<keyword id="KW-0234">DNA repair</keyword>
<keyword id="KW-0267">Excision nuclease</keyword>
<keyword id="KW-0742">SOS response</keyword>
<sequence length="615" mass="70581">MNNLIKSKLELLPTSPGCYIHKDKNGSIIYVGKAKNLRNRVRSYFRGSHDTKTEALVSEIVDFEFIVTESNIEALLLEINLIKENKPKYNIMLKDDKSYPFIKITNERYPRLIITRQVKKDGGLYFGPYPDVGAANEIKRLLDRIFPFRKCTNPPSKVCFYYHIGQCMAHTICKKDEAYFKSMAQEVSDFLKGQDNKIIDELKGKMAAAAQTMEFERAAEYRDLIQAIGTLRTKQRVMAKDLQNRDVFGYYVDKGWMCVQVFFVRQGKLIERDVNLFPYFNDPDEDFLTYVGQFYQEKSHLVPNEVLIPQDIDEEAVKALVDTKILKPQRGEKKQLVNLAIKNARVSLEQKFNLLEKSVEKTQGAIENLGRLLQIPTPVRIESFDNSNIMGTSPVSAMVVFVNGRPSKKDYRKYKIKTVVGPDDYASMREVIRRRYGRVQREALTPPDLIVIDGGQGQVNIAKQVIQEELGLDIPIAGLQKNDKHQTHELLFGDPLEVVDLSRNSQEFFLLQRIQDEVHRFAITFHRQLRSKNSFSSQLDGIDGLGPKRKQNLMRHFKSLTKIKEASVDEIVEVGVPRAVAEAVQTKLNPQETEILLQVAEERVDYQTEGNHNKP</sequence>
<dbReference type="EMBL" id="CP000919">
    <property type="protein sequence ID" value="ACO19209.1"/>
    <property type="molecule type" value="Genomic_DNA"/>
</dbReference>
<dbReference type="RefSeq" id="WP_001061112.1">
    <property type="nucleotide sequence ID" value="NC_012466.1"/>
</dbReference>
<dbReference type="SMR" id="C1CCZ1"/>
<dbReference type="KEGG" id="sjj:SPJ_0569"/>
<dbReference type="HOGENOM" id="CLU_014841_3_2_9"/>
<dbReference type="Proteomes" id="UP000002206">
    <property type="component" value="Chromosome"/>
</dbReference>
<dbReference type="GO" id="GO:0005737">
    <property type="term" value="C:cytoplasm"/>
    <property type="evidence" value="ECO:0007669"/>
    <property type="project" value="UniProtKB-SubCell"/>
</dbReference>
<dbReference type="GO" id="GO:0009380">
    <property type="term" value="C:excinuclease repair complex"/>
    <property type="evidence" value="ECO:0007669"/>
    <property type="project" value="InterPro"/>
</dbReference>
<dbReference type="GO" id="GO:0003677">
    <property type="term" value="F:DNA binding"/>
    <property type="evidence" value="ECO:0007669"/>
    <property type="project" value="UniProtKB-UniRule"/>
</dbReference>
<dbReference type="GO" id="GO:0009381">
    <property type="term" value="F:excinuclease ABC activity"/>
    <property type="evidence" value="ECO:0007669"/>
    <property type="project" value="UniProtKB-UniRule"/>
</dbReference>
<dbReference type="GO" id="GO:0006289">
    <property type="term" value="P:nucleotide-excision repair"/>
    <property type="evidence" value="ECO:0007669"/>
    <property type="project" value="UniProtKB-UniRule"/>
</dbReference>
<dbReference type="GO" id="GO:0009432">
    <property type="term" value="P:SOS response"/>
    <property type="evidence" value="ECO:0007669"/>
    <property type="project" value="UniProtKB-UniRule"/>
</dbReference>
<dbReference type="CDD" id="cd10434">
    <property type="entry name" value="GIY-YIG_UvrC_Cho"/>
    <property type="match status" value="1"/>
</dbReference>
<dbReference type="FunFam" id="1.10.150.20:FF:000005">
    <property type="entry name" value="UvrABC system protein C"/>
    <property type="match status" value="1"/>
</dbReference>
<dbReference type="FunFam" id="3.30.420.340:FF:000002">
    <property type="entry name" value="UvrABC system protein C"/>
    <property type="match status" value="1"/>
</dbReference>
<dbReference type="FunFam" id="3.40.1440.10:FF:000001">
    <property type="entry name" value="UvrABC system protein C"/>
    <property type="match status" value="1"/>
</dbReference>
<dbReference type="FunFam" id="4.10.860.10:FF:000007">
    <property type="entry name" value="UvrABC system protein C"/>
    <property type="match status" value="1"/>
</dbReference>
<dbReference type="Gene3D" id="1.10.150.20">
    <property type="entry name" value="5' to 3' exonuclease, C-terminal subdomain"/>
    <property type="match status" value="1"/>
</dbReference>
<dbReference type="Gene3D" id="3.40.1440.10">
    <property type="entry name" value="GIY-YIG endonuclease"/>
    <property type="match status" value="1"/>
</dbReference>
<dbReference type="Gene3D" id="4.10.860.10">
    <property type="entry name" value="UVR domain"/>
    <property type="match status" value="1"/>
</dbReference>
<dbReference type="Gene3D" id="3.30.420.340">
    <property type="entry name" value="UvrC, RNAse H endonuclease domain"/>
    <property type="match status" value="1"/>
</dbReference>
<dbReference type="HAMAP" id="MF_00203">
    <property type="entry name" value="UvrC"/>
    <property type="match status" value="1"/>
</dbReference>
<dbReference type="InterPro" id="IPR000305">
    <property type="entry name" value="GIY-YIG_endonuc"/>
</dbReference>
<dbReference type="InterPro" id="IPR035901">
    <property type="entry name" value="GIY-YIG_endonuc_sf"/>
</dbReference>
<dbReference type="InterPro" id="IPR047296">
    <property type="entry name" value="GIY-YIG_UvrC_Cho"/>
</dbReference>
<dbReference type="InterPro" id="IPR010994">
    <property type="entry name" value="RuvA_2-like"/>
</dbReference>
<dbReference type="InterPro" id="IPR001943">
    <property type="entry name" value="UVR_dom"/>
</dbReference>
<dbReference type="InterPro" id="IPR036876">
    <property type="entry name" value="UVR_dom_sf"/>
</dbReference>
<dbReference type="InterPro" id="IPR050066">
    <property type="entry name" value="UvrABC_protein_C"/>
</dbReference>
<dbReference type="InterPro" id="IPR004791">
    <property type="entry name" value="UvrC"/>
</dbReference>
<dbReference type="InterPro" id="IPR001162">
    <property type="entry name" value="UvrC_RNase_H_dom"/>
</dbReference>
<dbReference type="InterPro" id="IPR038476">
    <property type="entry name" value="UvrC_RNase_H_dom_sf"/>
</dbReference>
<dbReference type="NCBIfam" id="TIGR00194">
    <property type="entry name" value="uvrC"/>
    <property type="match status" value="1"/>
</dbReference>
<dbReference type="PANTHER" id="PTHR30562:SF1">
    <property type="entry name" value="UVRABC SYSTEM PROTEIN C"/>
    <property type="match status" value="1"/>
</dbReference>
<dbReference type="PANTHER" id="PTHR30562">
    <property type="entry name" value="UVRC/OXIDOREDUCTASE"/>
    <property type="match status" value="1"/>
</dbReference>
<dbReference type="Pfam" id="PF01541">
    <property type="entry name" value="GIY-YIG"/>
    <property type="match status" value="1"/>
</dbReference>
<dbReference type="Pfam" id="PF14520">
    <property type="entry name" value="HHH_5"/>
    <property type="match status" value="1"/>
</dbReference>
<dbReference type="Pfam" id="PF02151">
    <property type="entry name" value="UVR"/>
    <property type="match status" value="1"/>
</dbReference>
<dbReference type="Pfam" id="PF22920">
    <property type="entry name" value="UvrC_RNaseH"/>
    <property type="match status" value="1"/>
</dbReference>
<dbReference type="Pfam" id="PF08459">
    <property type="entry name" value="UvrC_RNaseH_dom"/>
    <property type="match status" value="1"/>
</dbReference>
<dbReference type="SMART" id="SM00465">
    <property type="entry name" value="GIYc"/>
    <property type="match status" value="1"/>
</dbReference>
<dbReference type="SUPFAM" id="SSF46600">
    <property type="entry name" value="C-terminal UvrC-binding domain of UvrB"/>
    <property type="match status" value="1"/>
</dbReference>
<dbReference type="SUPFAM" id="SSF82771">
    <property type="entry name" value="GIY-YIG endonuclease"/>
    <property type="match status" value="1"/>
</dbReference>
<dbReference type="SUPFAM" id="SSF47781">
    <property type="entry name" value="RuvA domain 2-like"/>
    <property type="match status" value="1"/>
</dbReference>
<dbReference type="PROSITE" id="PS50164">
    <property type="entry name" value="GIY_YIG"/>
    <property type="match status" value="1"/>
</dbReference>
<dbReference type="PROSITE" id="PS50151">
    <property type="entry name" value="UVR"/>
    <property type="match status" value="1"/>
</dbReference>
<dbReference type="PROSITE" id="PS50165">
    <property type="entry name" value="UVRC"/>
    <property type="match status" value="1"/>
</dbReference>
<feature type="chain" id="PRO_1000200604" description="UvrABC system protein C">
    <location>
        <begin position="1"/>
        <end position="615"/>
    </location>
</feature>
<feature type="domain" description="GIY-YIG" evidence="1">
    <location>
        <begin position="14"/>
        <end position="91"/>
    </location>
</feature>
<feature type="domain" description="UVR" evidence="1">
    <location>
        <begin position="196"/>
        <end position="231"/>
    </location>
</feature>